<proteinExistence type="inferred from homology"/>
<reference key="1">
    <citation type="journal article" date="2001" name="Nature">
        <title>Genome sequence of enterohaemorrhagic Escherichia coli O157:H7.</title>
        <authorList>
            <person name="Perna N.T."/>
            <person name="Plunkett G. III"/>
            <person name="Burland V."/>
            <person name="Mau B."/>
            <person name="Glasner J.D."/>
            <person name="Rose D.J."/>
            <person name="Mayhew G.F."/>
            <person name="Evans P.S."/>
            <person name="Gregor J."/>
            <person name="Kirkpatrick H.A."/>
            <person name="Posfai G."/>
            <person name="Hackett J."/>
            <person name="Klink S."/>
            <person name="Boutin A."/>
            <person name="Shao Y."/>
            <person name="Miller L."/>
            <person name="Grotbeck E.J."/>
            <person name="Davis N.W."/>
            <person name="Lim A."/>
            <person name="Dimalanta E.T."/>
            <person name="Potamousis K."/>
            <person name="Apodaca J."/>
            <person name="Anantharaman T.S."/>
            <person name="Lin J."/>
            <person name="Yen G."/>
            <person name="Schwartz D.C."/>
            <person name="Welch R.A."/>
            <person name="Blattner F.R."/>
        </authorList>
    </citation>
    <scope>NUCLEOTIDE SEQUENCE [LARGE SCALE GENOMIC DNA]</scope>
    <source>
        <strain>O157:H7 / EDL933 / ATCC 700927 / EHEC</strain>
    </source>
</reference>
<reference key="2">
    <citation type="journal article" date="2001" name="DNA Res.">
        <title>Complete genome sequence of enterohemorrhagic Escherichia coli O157:H7 and genomic comparison with a laboratory strain K-12.</title>
        <authorList>
            <person name="Hayashi T."/>
            <person name="Makino K."/>
            <person name="Ohnishi M."/>
            <person name="Kurokawa K."/>
            <person name="Ishii K."/>
            <person name="Yokoyama K."/>
            <person name="Han C.-G."/>
            <person name="Ohtsubo E."/>
            <person name="Nakayama K."/>
            <person name="Murata T."/>
            <person name="Tanaka M."/>
            <person name="Tobe T."/>
            <person name="Iida T."/>
            <person name="Takami H."/>
            <person name="Honda T."/>
            <person name="Sasakawa C."/>
            <person name="Ogasawara N."/>
            <person name="Yasunaga T."/>
            <person name="Kuhara S."/>
            <person name="Shiba T."/>
            <person name="Hattori M."/>
            <person name="Shinagawa H."/>
        </authorList>
    </citation>
    <scope>NUCLEOTIDE SEQUENCE [LARGE SCALE GENOMIC DNA]</scope>
    <source>
        <strain>O157:H7 / Sakai / RIMD 0509952 / EHEC</strain>
    </source>
</reference>
<name>MBHT_ECO57</name>
<protein>
    <recommendedName>
        <fullName>Hydrogenase-2 small chain</fullName>
        <shortName>HYD2</shortName>
        <ecNumber>1.12.99.6</ecNumber>
    </recommendedName>
    <alternativeName>
        <fullName>Membrane-bound hydrogenase 2 small subunit</fullName>
    </alternativeName>
    <alternativeName>
        <fullName>NiFe hydrogenase</fullName>
    </alternativeName>
</protein>
<dbReference type="EC" id="1.12.99.6"/>
<dbReference type="EMBL" id="AE005174">
    <property type="protein sequence ID" value="AAG58134.1"/>
    <property type="molecule type" value="Genomic_DNA"/>
</dbReference>
<dbReference type="EMBL" id="BA000007">
    <property type="protein sequence ID" value="BAB37305.1"/>
    <property type="molecule type" value="Genomic_DNA"/>
</dbReference>
<dbReference type="PIR" id="B85959">
    <property type="entry name" value="B85959"/>
</dbReference>
<dbReference type="PIR" id="B91114">
    <property type="entry name" value="B91114"/>
</dbReference>
<dbReference type="RefSeq" id="NP_311909.1">
    <property type="nucleotide sequence ID" value="NC_002695.1"/>
</dbReference>
<dbReference type="RefSeq" id="WP_000145410.1">
    <property type="nucleotide sequence ID" value="NZ_VOAI01000009.1"/>
</dbReference>
<dbReference type="SMR" id="P69743"/>
<dbReference type="STRING" id="155864.Z4351"/>
<dbReference type="GeneID" id="916289"/>
<dbReference type="GeneID" id="93778988"/>
<dbReference type="KEGG" id="ece:Z4351"/>
<dbReference type="KEGG" id="ecs:ECs_3882"/>
<dbReference type="PATRIC" id="fig|386585.9.peg.4049"/>
<dbReference type="eggNOG" id="COG1740">
    <property type="taxonomic scope" value="Bacteria"/>
</dbReference>
<dbReference type="HOGENOM" id="CLU_046107_0_1_6"/>
<dbReference type="OMA" id="VPGCPIQ"/>
<dbReference type="Proteomes" id="UP000000558">
    <property type="component" value="Chromosome"/>
</dbReference>
<dbReference type="Proteomes" id="UP000002519">
    <property type="component" value="Chromosome"/>
</dbReference>
<dbReference type="GO" id="GO:0044569">
    <property type="term" value="C:[Ni-Fe] hydrogenase complex"/>
    <property type="evidence" value="ECO:0007669"/>
    <property type="project" value="TreeGrafter"/>
</dbReference>
<dbReference type="GO" id="GO:0009375">
    <property type="term" value="C:ferredoxin hydrogenase complex"/>
    <property type="evidence" value="ECO:0007669"/>
    <property type="project" value="InterPro"/>
</dbReference>
<dbReference type="GO" id="GO:0042597">
    <property type="term" value="C:periplasmic space"/>
    <property type="evidence" value="ECO:0007669"/>
    <property type="project" value="UniProtKB-SubCell"/>
</dbReference>
<dbReference type="GO" id="GO:0005886">
    <property type="term" value="C:plasma membrane"/>
    <property type="evidence" value="ECO:0007669"/>
    <property type="project" value="UniProtKB-SubCell"/>
</dbReference>
<dbReference type="GO" id="GO:0051538">
    <property type="term" value="F:3 iron, 4 sulfur cluster binding"/>
    <property type="evidence" value="ECO:0007669"/>
    <property type="project" value="UniProtKB-KW"/>
</dbReference>
<dbReference type="GO" id="GO:0051539">
    <property type="term" value="F:4 iron, 4 sulfur cluster binding"/>
    <property type="evidence" value="ECO:0007669"/>
    <property type="project" value="UniProtKB-KW"/>
</dbReference>
<dbReference type="GO" id="GO:0009055">
    <property type="term" value="F:electron transfer activity"/>
    <property type="evidence" value="ECO:0007669"/>
    <property type="project" value="TreeGrafter"/>
</dbReference>
<dbReference type="GO" id="GO:0008901">
    <property type="term" value="F:ferredoxin hydrogenase activity"/>
    <property type="evidence" value="ECO:0007669"/>
    <property type="project" value="InterPro"/>
</dbReference>
<dbReference type="GO" id="GO:0033748">
    <property type="term" value="F:hydrogenase (acceptor) activity"/>
    <property type="evidence" value="ECO:0007669"/>
    <property type="project" value="UniProtKB-EC"/>
</dbReference>
<dbReference type="GO" id="GO:0046872">
    <property type="term" value="F:metal ion binding"/>
    <property type="evidence" value="ECO:0007669"/>
    <property type="project" value="UniProtKB-KW"/>
</dbReference>
<dbReference type="GO" id="GO:0009061">
    <property type="term" value="P:anaerobic respiration"/>
    <property type="evidence" value="ECO:0007669"/>
    <property type="project" value="TreeGrafter"/>
</dbReference>
<dbReference type="FunFam" id="3.40.50.700:FF:000001">
    <property type="entry name" value="Hydrogenase 2 small subunit"/>
    <property type="match status" value="1"/>
</dbReference>
<dbReference type="FunFam" id="4.10.480.10:FF:000001">
    <property type="entry name" value="Hydrogenase 2 small subunit"/>
    <property type="match status" value="1"/>
</dbReference>
<dbReference type="Gene3D" id="4.10.480.10">
    <property type="entry name" value="Cytochrome-c3 hydrogenase, C-terminal domain"/>
    <property type="match status" value="1"/>
</dbReference>
<dbReference type="Gene3D" id="3.40.50.700">
    <property type="entry name" value="NADH:ubiquinone oxidoreductase-like, 20kDa subunit"/>
    <property type="match status" value="1"/>
</dbReference>
<dbReference type="InterPro" id="IPR027394">
    <property type="entry name" value="Cytochrome-c3_hydrogenase_C"/>
</dbReference>
<dbReference type="InterPro" id="IPR006137">
    <property type="entry name" value="NADH_UbQ_OxRdtase-like_20kDa"/>
</dbReference>
<dbReference type="InterPro" id="IPR037148">
    <property type="entry name" value="NiFe-Hase_small_C_sf"/>
</dbReference>
<dbReference type="InterPro" id="IPR037024">
    <property type="entry name" value="NiFe_Hase_small_N_sf"/>
</dbReference>
<dbReference type="InterPro" id="IPR001821">
    <property type="entry name" value="NiFe_hydrogenase_ssu"/>
</dbReference>
<dbReference type="InterPro" id="IPR006311">
    <property type="entry name" value="TAT_signal"/>
</dbReference>
<dbReference type="InterPro" id="IPR019546">
    <property type="entry name" value="TAT_signal_bac_arc"/>
</dbReference>
<dbReference type="NCBIfam" id="TIGR00391">
    <property type="entry name" value="hydA"/>
    <property type="match status" value="1"/>
</dbReference>
<dbReference type="NCBIfam" id="NF007779">
    <property type="entry name" value="PRK10468.1"/>
    <property type="match status" value="1"/>
</dbReference>
<dbReference type="NCBIfam" id="TIGR01409">
    <property type="entry name" value="TAT_signal_seq"/>
    <property type="match status" value="1"/>
</dbReference>
<dbReference type="PANTHER" id="PTHR30013:SF7">
    <property type="entry name" value="HYDROGENASE-2 SMALL CHAIN"/>
    <property type="match status" value="1"/>
</dbReference>
<dbReference type="PANTHER" id="PTHR30013">
    <property type="entry name" value="NIFE / NIFESE HYDROGENASE SMALL SUBUNIT FAMILY MEMBER"/>
    <property type="match status" value="1"/>
</dbReference>
<dbReference type="Pfam" id="PF14720">
    <property type="entry name" value="NiFe_hyd_SSU_C"/>
    <property type="match status" value="1"/>
</dbReference>
<dbReference type="Pfam" id="PF01058">
    <property type="entry name" value="Oxidored_q6"/>
    <property type="match status" value="1"/>
</dbReference>
<dbReference type="PIRSF" id="PIRSF000310">
    <property type="entry name" value="NiFe_hyd_ssu"/>
    <property type="match status" value="1"/>
</dbReference>
<dbReference type="PRINTS" id="PR00614">
    <property type="entry name" value="NIHGNASESMLL"/>
</dbReference>
<dbReference type="SUPFAM" id="SSF56770">
    <property type="entry name" value="HydA/Nqo6-like"/>
    <property type="match status" value="1"/>
</dbReference>
<dbReference type="PROSITE" id="PS51318">
    <property type="entry name" value="TAT"/>
    <property type="match status" value="1"/>
</dbReference>
<feature type="signal peptide" description="Tat-type signal" evidence="2">
    <location>
        <begin position="1"/>
        <end position="37"/>
    </location>
</feature>
<feature type="chain" id="PRO_0000013432" description="Hydrogenase-2 small chain">
    <location>
        <begin position="38"/>
        <end position="372"/>
    </location>
</feature>
<feature type="binding site" evidence="1">
    <location>
        <position position="59"/>
    </location>
    <ligand>
        <name>[4Fe-4S] cluster</name>
        <dbReference type="ChEBI" id="CHEBI:49883"/>
        <label>1</label>
    </ligand>
</feature>
<feature type="binding site" evidence="1">
    <location>
        <position position="62"/>
    </location>
    <ligand>
        <name>[4Fe-4S] cluster</name>
        <dbReference type="ChEBI" id="CHEBI:49883"/>
        <label>1</label>
    </ligand>
</feature>
<feature type="binding site" evidence="1">
    <location>
        <position position="157"/>
    </location>
    <ligand>
        <name>[4Fe-4S] cluster</name>
        <dbReference type="ChEBI" id="CHEBI:49883"/>
        <label>1</label>
    </ligand>
</feature>
<feature type="binding site" evidence="1">
    <location>
        <position position="191"/>
    </location>
    <ligand>
        <name>[4Fe-4S] cluster</name>
        <dbReference type="ChEBI" id="CHEBI:49883"/>
        <label>1</label>
    </ligand>
</feature>
<feature type="binding site" evidence="1">
    <location>
        <position position="229"/>
    </location>
    <ligand>
        <name>[4Fe-4S] cluster</name>
        <dbReference type="ChEBI" id="CHEBI:49883"/>
        <label>2</label>
    </ligand>
</feature>
<feature type="binding site" evidence="1">
    <location>
        <position position="232"/>
    </location>
    <ligand>
        <name>[4Fe-4S] cluster</name>
        <dbReference type="ChEBI" id="CHEBI:49883"/>
        <label>2</label>
    </ligand>
</feature>
<feature type="binding site" evidence="1">
    <location>
        <position position="257"/>
    </location>
    <ligand>
        <name>[4Fe-4S] cluster</name>
        <dbReference type="ChEBI" id="CHEBI:49883"/>
        <label>2</label>
    </ligand>
</feature>
<feature type="binding site" evidence="1">
    <location>
        <position position="263"/>
    </location>
    <ligand>
        <name>[4Fe-4S] cluster</name>
        <dbReference type="ChEBI" id="CHEBI:49883"/>
        <label>2</label>
    </ligand>
</feature>
<feature type="binding site" evidence="1">
    <location>
        <position position="272"/>
    </location>
    <ligand>
        <name>[3Fe-4S] cluster</name>
        <dbReference type="ChEBI" id="CHEBI:21137"/>
    </ligand>
</feature>
<feature type="binding site" evidence="1">
    <location>
        <position position="292"/>
    </location>
    <ligand>
        <name>[3Fe-4S] cluster</name>
        <dbReference type="ChEBI" id="CHEBI:21137"/>
    </ligand>
</feature>
<feature type="binding site" evidence="1">
    <location>
        <position position="295"/>
    </location>
    <ligand>
        <name>[3Fe-4S] cluster</name>
        <dbReference type="ChEBI" id="CHEBI:21137"/>
    </ligand>
</feature>
<sequence>MTGDNTLIHSHGINRRDFMKLCAALAATMGLSSKAAAEMAESVTNPQRPPVIWIGAQECTGCTESLLRATHPTVENLVLETISLEYHEVLSAAFGHQVEENKHNALEKYKGQYVLVVDGSIPLKDNGIYCMVAGEPIVDHIRKAAEGAAAIIAIGSCSAWGGVAAAGVNPTGAVSLQEVLPGKTVINIPGCPPNPHNFLATVAHIITYGKPPKLDDKNRPTFAYGRLIHEHCERRPHFDAGRFAKEFGDEGHREGWCLYHLGCKGPETYGNCSTLQFCDVGGVWPVAIGHPCYGCNEEGIGFHKGIHQLANVENQTPRSQKPDVNAKEGGNVSAGAIGLLGGVVGLVAGVSVMAVRELGRQQKKDNADSRGE</sequence>
<comment type="function">
    <text>This is one of three E.coli hydrogenases synthesized in response to different physiological conditions. HYD2 is involved in hydrogen uptake.</text>
</comment>
<comment type="catalytic activity">
    <reaction>
        <text>H2 + A = AH2</text>
        <dbReference type="Rhea" id="RHEA:12116"/>
        <dbReference type="ChEBI" id="CHEBI:13193"/>
        <dbReference type="ChEBI" id="CHEBI:17499"/>
        <dbReference type="ChEBI" id="CHEBI:18276"/>
        <dbReference type="EC" id="1.12.99.6"/>
    </reaction>
</comment>
<comment type="cofactor">
    <cofactor evidence="1">
        <name>[4Fe-4S] cluster</name>
        <dbReference type="ChEBI" id="CHEBI:49883"/>
    </cofactor>
    <text evidence="1">Binds 2 [4Fe-4S] clusters.</text>
</comment>
<comment type="cofactor">
    <cofactor evidence="1">
        <name>[3Fe-4S] cluster</name>
        <dbReference type="ChEBI" id="CHEBI:21137"/>
    </cofactor>
    <text evidence="1">Binds 1 [3Fe-4S] cluster.</text>
</comment>
<comment type="subunit">
    <text>Heterodimer of a large and a small subunit.</text>
</comment>
<comment type="subcellular location">
    <subcellularLocation>
        <location>Cell membrane</location>
        <topology>Peripheral membrane protein</topology>
        <orientation>Periplasmic side</orientation>
    </subcellularLocation>
    <subcellularLocation>
        <location>Periplasm</location>
    </subcellularLocation>
</comment>
<comment type="PTM">
    <text>Predicted to be exported by the Tat system. The position of the signal peptide cleavage has not been experimentally proven.</text>
</comment>
<comment type="similarity">
    <text evidence="3">Belongs to the [NiFe]/[NiFeSe] hydrogenase small subunit family.</text>
</comment>
<gene>
    <name type="primary">hybO</name>
    <name type="ordered locus">Z4351</name>
    <name type="ordered locus">ECs3882</name>
</gene>
<organism>
    <name type="scientific">Escherichia coli O157:H7</name>
    <dbReference type="NCBI Taxonomy" id="83334"/>
    <lineage>
        <taxon>Bacteria</taxon>
        <taxon>Pseudomonadati</taxon>
        <taxon>Pseudomonadota</taxon>
        <taxon>Gammaproteobacteria</taxon>
        <taxon>Enterobacterales</taxon>
        <taxon>Enterobacteriaceae</taxon>
        <taxon>Escherichia</taxon>
    </lineage>
</organism>
<evidence type="ECO:0000250" key="1">
    <source>
        <dbReference type="UniProtKB" id="P21853"/>
    </source>
</evidence>
<evidence type="ECO:0000255" key="2">
    <source>
        <dbReference type="PROSITE-ProRule" id="PRU00648"/>
    </source>
</evidence>
<evidence type="ECO:0000305" key="3"/>
<keyword id="KW-0003">3Fe-4S</keyword>
<keyword id="KW-0004">4Fe-4S</keyword>
<keyword id="KW-1003">Cell membrane</keyword>
<keyword id="KW-0408">Iron</keyword>
<keyword id="KW-0411">Iron-sulfur</keyword>
<keyword id="KW-0472">Membrane</keyword>
<keyword id="KW-0479">Metal-binding</keyword>
<keyword id="KW-0560">Oxidoreductase</keyword>
<keyword id="KW-0574">Periplasm</keyword>
<keyword id="KW-1185">Reference proteome</keyword>
<keyword id="KW-0732">Signal</keyword>
<accession>P69743</accession>
<accession>Q46847</accession>